<keyword id="KW-0002">3D-structure</keyword>
<keyword id="KW-0119">Carbohydrate metabolism</keyword>
<keyword id="KW-0961">Cell wall biogenesis/degradation</keyword>
<keyword id="KW-1015">Disulfide bond</keyword>
<keyword id="KW-0326">Glycosidase</keyword>
<keyword id="KW-0378">Hydrolase</keyword>
<keyword id="KW-0464">Manganese</keyword>
<keyword id="KW-0479">Metal-binding</keyword>
<keyword id="KW-0624">Polysaccharide degradation</keyword>
<keyword id="KW-1185">Reference proteome</keyword>
<keyword id="KW-0964">Secreted</keyword>
<keyword id="KW-0732">Signal</keyword>
<gene>
    <name type="primary">exgA</name>
    <name type="synonym">exg1</name>
    <name type="ORF">AO090003000990</name>
</gene>
<protein>
    <recommendedName>
        <fullName>Glucan 1,3-beta-glucosidase A</fullName>
        <ecNumber>3.2.1.58</ecNumber>
    </recommendedName>
    <alternativeName>
        <fullName>Exo-1,3-beta-glucanase 1</fullName>
    </alternativeName>
    <alternativeName>
        <fullName>Exo-1,3-beta-glucanase A</fullName>
    </alternativeName>
</protein>
<evidence type="ECO:0000250" key="1"/>
<evidence type="ECO:0000255" key="2"/>
<evidence type="ECO:0000269" key="3">
    <source>
    </source>
</evidence>
<evidence type="ECO:0000269" key="4">
    <source>
    </source>
</evidence>
<evidence type="ECO:0000305" key="5"/>
<evidence type="ECO:0007829" key="6">
    <source>
        <dbReference type="PDB" id="8Z2X"/>
    </source>
</evidence>
<evidence type="ECO:0007829" key="7">
    <source>
        <dbReference type="PDB" id="8Z2Y"/>
    </source>
</evidence>
<organism>
    <name type="scientific">Aspergillus oryzae (strain ATCC 42149 / RIB 40)</name>
    <name type="common">Yellow koji mold</name>
    <dbReference type="NCBI Taxonomy" id="510516"/>
    <lineage>
        <taxon>Eukaryota</taxon>
        <taxon>Fungi</taxon>
        <taxon>Dikarya</taxon>
        <taxon>Ascomycota</taxon>
        <taxon>Pezizomycotina</taxon>
        <taxon>Eurotiomycetes</taxon>
        <taxon>Eurotiomycetidae</taxon>
        <taxon>Eurotiales</taxon>
        <taxon>Aspergillaceae</taxon>
        <taxon>Aspergillus</taxon>
        <taxon>Aspergillus subgen. Circumdati</taxon>
    </lineage>
</organism>
<reference key="1">
    <citation type="submission" date="2003-06" db="EMBL/GenBank/DDBJ databases">
        <title>High glucose-tolerant beta-glucosidase gene from Aspergillus oryzae.</title>
        <authorList>
            <person name="Riou C."/>
            <person name="Gunata Z."/>
        </authorList>
    </citation>
    <scope>NUCLEOTIDE SEQUENCE [GENOMIC DNA]</scope>
</reference>
<reference key="2">
    <citation type="journal article" date="2005" name="Nature">
        <title>Genome sequencing and analysis of Aspergillus oryzae.</title>
        <authorList>
            <person name="Machida M."/>
            <person name="Asai K."/>
            <person name="Sano M."/>
            <person name="Tanaka T."/>
            <person name="Kumagai T."/>
            <person name="Terai G."/>
            <person name="Kusumoto K."/>
            <person name="Arima T."/>
            <person name="Akita O."/>
            <person name="Kashiwagi Y."/>
            <person name="Abe K."/>
            <person name="Gomi K."/>
            <person name="Horiuchi H."/>
            <person name="Kitamoto K."/>
            <person name="Kobayashi T."/>
            <person name="Takeuchi M."/>
            <person name="Denning D.W."/>
            <person name="Galagan J.E."/>
            <person name="Nierman W.C."/>
            <person name="Yu J."/>
            <person name="Archer D.B."/>
            <person name="Bennett J.W."/>
            <person name="Bhatnagar D."/>
            <person name="Cleveland T.E."/>
            <person name="Fedorova N.D."/>
            <person name="Gotoh O."/>
            <person name="Horikawa H."/>
            <person name="Hosoyama A."/>
            <person name="Ichinomiya M."/>
            <person name="Igarashi R."/>
            <person name="Iwashita K."/>
            <person name="Juvvadi P.R."/>
            <person name="Kato M."/>
            <person name="Kato Y."/>
            <person name="Kin T."/>
            <person name="Kokubun A."/>
            <person name="Maeda H."/>
            <person name="Maeyama N."/>
            <person name="Maruyama J."/>
            <person name="Nagasaki H."/>
            <person name="Nakajima T."/>
            <person name="Oda K."/>
            <person name="Okada K."/>
            <person name="Paulsen I."/>
            <person name="Sakamoto K."/>
            <person name="Sawano T."/>
            <person name="Takahashi M."/>
            <person name="Takase K."/>
            <person name="Terabayashi Y."/>
            <person name="Wortman J.R."/>
            <person name="Yamada O."/>
            <person name="Yamagata Y."/>
            <person name="Anazawa H."/>
            <person name="Hata Y."/>
            <person name="Koide Y."/>
            <person name="Komori T."/>
            <person name="Koyama Y."/>
            <person name="Minetoki T."/>
            <person name="Suharnan S."/>
            <person name="Tanaka A."/>
            <person name="Isono K."/>
            <person name="Kuhara S."/>
            <person name="Ogasawara N."/>
            <person name="Kikuchi H."/>
        </authorList>
    </citation>
    <scope>NUCLEOTIDE SEQUENCE [LARGE SCALE GENOMIC DNA]</scope>
    <source>
        <strain>ATCC 42149 / RIB 40</strain>
    </source>
</reference>
<reference key="3">
    <citation type="journal article" date="1998" name="Appl. Environ. Microbiol.">
        <title>Purification, characterization, and substrate specificity of a novel highly glucose-tolerant beta-glucosidase from Aspergillus oryzae.</title>
        <authorList>
            <person name="Riou C."/>
            <person name="Salmon J.-M."/>
            <person name="Vallier M.-J."/>
            <person name="Guenata Z."/>
            <person name="Barre P."/>
        </authorList>
    </citation>
    <scope>COFACTOR</scope>
    <scope>SUBUNIT</scope>
    <scope>SUBCELLULAR LOCATION</scope>
    <source>
        <strain>ATCC 11489 / CBS 125.59 / IMI 52143 / NRRL 695</strain>
    </source>
</reference>
<reference key="4">
    <citation type="journal article" date="2007" name="Biosci. Biotechnol. Biochem.">
        <title>The beta-1,3-exoglucanase gene exgA (exg1) of Aspergillus oryzae is required to catabolize extracellular glucan, and is induced in growth on a solid surface.</title>
        <authorList>
            <person name="Tamano K."/>
            <person name="Satoh Y."/>
            <person name="Ishii T."/>
            <person name="Terabayashi Y."/>
            <person name="Ohtaki S."/>
            <person name="Sano M."/>
            <person name="Takahashi T."/>
            <person name="Koyama Y."/>
            <person name="Mizutani O."/>
            <person name="Abe K."/>
            <person name="Machida M."/>
        </authorList>
    </citation>
    <scope>FUNCTION</scope>
    <scope>INDUCTION</scope>
</reference>
<sequence>MLPLLLCIVPYCWSSRLDPRASSFDYNGEKVRGVNLGGWLVLEPWITPSIFDAAGAEAVDEWSLTKILGKEEAEARLSAHWKSFVSAGDFQRMADAGLNHVRIPIGYWALGPLEGDPYVDGQLEYLDKAVEWAGAAGLKVLIDLHGAPGSQNGFDNSGRRGAIQWQQGDTVEQTLDAFDLLAERYLGSDTVAAIEAINEPNIPGGVDQGKLQEYYGSVYGIVNKYNAGTSVVYGDGFLPVESWNGFKTEGSKVVMDTHHYHMFDNGLIAMDIDSHIDAVCQFAHQHLEASDKPVIVGEWTGAVTDCAKYLNGKGNGARYDGSYAADKAIGDCSSLATGFVSKLSDEERSDMRRFIEAQLDAFELKSGWVFWTWKTEGAPGWDMSDLLEAGVFPTSPDDREFPKQC</sequence>
<feature type="signal peptide" evidence="2">
    <location>
        <begin position="1"/>
        <end position="14"/>
    </location>
</feature>
<feature type="chain" id="PRO_0000007876" description="Glucan 1,3-beta-glucosidase A">
    <location>
        <begin position="15"/>
        <end position="405"/>
    </location>
</feature>
<feature type="active site" description="Proton donor" evidence="1">
    <location>
        <position position="199"/>
    </location>
</feature>
<feature type="active site" description="Nucleophile" evidence="1">
    <location>
        <position position="298"/>
    </location>
</feature>
<feature type="disulfide bond" evidence="1">
    <location>
        <begin position="280"/>
        <end position="405"/>
    </location>
</feature>
<feature type="disulfide bond" evidence="1">
    <location>
        <begin position="306"/>
        <end position="332"/>
    </location>
</feature>
<feature type="turn" evidence="7">
    <location>
        <begin position="26"/>
        <end position="28"/>
    </location>
</feature>
<feature type="strand" evidence="7">
    <location>
        <begin position="31"/>
        <end position="35"/>
    </location>
</feature>
<feature type="strand" evidence="7">
    <location>
        <begin position="39"/>
        <end position="41"/>
    </location>
</feature>
<feature type="turn" evidence="7">
    <location>
        <begin position="44"/>
        <end position="46"/>
    </location>
</feature>
<feature type="helix" evidence="7">
    <location>
        <begin position="48"/>
        <end position="52"/>
    </location>
</feature>
<feature type="helix" evidence="7">
    <location>
        <begin position="61"/>
        <end position="68"/>
    </location>
</feature>
<feature type="helix" evidence="7">
    <location>
        <begin position="70"/>
        <end position="84"/>
    </location>
</feature>
<feature type="helix" evidence="7">
    <location>
        <begin position="87"/>
        <end position="95"/>
    </location>
</feature>
<feature type="strand" evidence="7">
    <location>
        <begin position="100"/>
        <end position="106"/>
    </location>
</feature>
<feature type="helix" evidence="7">
    <location>
        <begin position="107"/>
        <end position="110"/>
    </location>
</feature>
<feature type="helix" evidence="7">
    <location>
        <begin position="122"/>
        <end position="136"/>
    </location>
</feature>
<feature type="strand" evidence="7">
    <location>
        <begin position="139"/>
        <end position="146"/>
    </location>
</feature>
<feature type="strand" evidence="7">
    <location>
        <begin position="151"/>
        <end position="153"/>
    </location>
</feature>
<feature type="helix" evidence="7">
    <location>
        <begin position="155"/>
        <end position="157"/>
    </location>
</feature>
<feature type="helix" evidence="7">
    <location>
        <begin position="170"/>
        <end position="185"/>
    </location>
</feature>
<feature type="strand" evidence="7">
    <location>
        <begin position="191"/>
        <end position="196"/>
    </location>
</feature>
<feature type="turn" evidence="7">
    <location>
        <begin position="202"/>
        <end position="205"/>
    </location>
</feature>
<feature type="helix" evidence="7">
    <location>
        <begin position="208"/>
        <end position="225"/>
    </location>
</feature>
<feature type="strand" evidence="7">
    <location>
        <begin position="229"/>
        <end position="234"/>
    </location>
</feature>
<feature type="helix" evidence="7">
    <location>
        <begin position="240"/>
        <end position="243"/>
    </location>
</feature>
<feature type="helix" evidence="7">
    <location>
        <begin position="250"/>
        <end position="252"/>
    </location>
</feature>
<feature type="strand" evidence="7">
    <location>
        <begin position="253"/>
        <end position="258"/>
    </location>
</feature>
<feature type="strand" evidence="7">
    <location>
        <begin position="261"/>
        <end position="264"/>
    </location>
</feature>
<feature type="helix" evidence="7">
    <location>
        <begin position="265"/>
        <end position="268"/>
    </location>
</feature>
<feature type="helix" evidence="7">
    <location>
        <begin position="272"/>
        <end position="285"/>
    </location>
</feature>
<feature type="helix" evidence="7">
    <location>
        <begin position="287"/>
        <end position="289"/>
    </location>
</feature>
<feature type="strand" evidence="7">
    <location>
        <begin position="294"/>
        <end position="298"/>
    </location>
</feature>
<feature type="turn" evidence="7">
    <location>
        <begin position="308"/>
        <end position="311"/>
    </location>
</feature>
<feature type="turn" evidence="7">
    <location>
        <begin position="318"/>
        <end position="321"/>
    </location>
</feature>
<feature type="strand" evidence="6">
    <location>
        <begin position="322"/>
        <end position="324"/>
    </location>
</feature>
<feature type="turn" evidence="7">
    <location>
        <begin position="333"/>
        <end position="335"/>
    </location>
</feature>
<feature type="strand" evidence="7">
    <location>
        <begin position="336"/>
        <end position="338"/>
    </location>
</feature>
<feature type="helix" evidence="7">
    <location>
        <begin position="340"/>
        <end position="342"/>
    </location>
</feature>
<feature type="helix" evidence="7">
    <location>
        <begin position="345"/>
        <end position="362"/>
    </location>
</feature>
<feature type="turn" evidence="7">
    <location>
        <begin position="363"/>
        <end position="366"/>
    </location>
</feature>
<feature type="strand" evidence="7">
    <location>
        <begin position="367"/>
        <end position="371"/>
    </location>
</feature>
<feature type="helix" evidence="7">
    <location>
        <begin position="383"/>
        <end position="388"/>
    </location>
</feature>
<dbReference type="EC" id="3.2.1.58"/>
<dbReference type="EMBL" id="AJ566365">
    <property type="protein sequence ID" value="CAD97460.1"/>
    <property type="molecule type" value="Genomic_DNA"/>
</dbReference>
<dbReference type="EMBL" id="BA000050">
    <property type="protein sequence ID" value="BAE58099.1"/>
    <property type="molecule type" value="Genomic_DNA"/>
</dbReference>
<dbReference type="PDB" id="8Z2W">
    <property type="method" value="X-ray"/>
    <property type="resolution" value="1.75 A"/>
    <property type="chains" value="A=1-405"/>
</dbReference>
<dbReference type="PDB" id="8Z2X">
    <property type="method" value="X-ray"/>
    <property type="resolution" value="1.73 A"/>
    <property type="chains" value="A=1-405"/>
</dbReference>
<dbReference type="PDB" id="8Z2Y">
    <property type="method" value="X-ray"/>
    <property type="resolution" value="1.20 A"/>
    <property type="chains" value="A=1-405"/>
</dbReference>
<dbReference type="PDBsum" id="8Z2W"/>
<dbReference type="PDBsum" id="8Z2X"/>
<dbReference type="PDBsum" id="8Z2Y"/>
<dbReference type="SMR" id="Q7Z9L3"/>
<dbReference type="STRING" id="510516.Q7Z9L3"/>
<dbReference type="CAZy" id="GH5">
    <property type="family name" value="Glycoside Hydrolase Family 5"/>
</dbReference>
<dbReference type="EnsemblFungi" id="BAE58099">
    <property type="protein sequence ID" value="BAE58099"/>
    <property type="gene ID" value="AO090003000990"/>
</dbReference>
<dbReference type="HOGENOM" id="CLU_004624_0_1_1"/>
<dbReference type="BioCyc" id="MetaCyc:MONOMER-16494"/>
<dbReference type="BRENDA" id="3.2.1.58">
    <property type="organism ID" value="522"/>
</dbReference>
<dbReference type="Proteomes" id="UP000006564">
    <property type="component" value="Chromosome 2"/>
</dbReference>
<dbReference type="GO" id="GO:0009986">
    <property type="term" value="C:cell surface"/>
    <property type="evidence" value="ECO:0007669"/>
    <property type="project" value="TreeGrafter"/>
</dbReference>
<dbReference type="GO" id="GO:0005576">
    <property type="term" value="C:extracellular region"/>
    <property type="evidence" value="ECO:0007669"/>
    <property type="project" value="UniProtKB-SubCell"/>
</dbReference>
<dbReference type="GO" id="GO:0004338">
    <property type="term" value="F:glucan exo-1,3-beta-glucosidase activity"/>
    <property type="evidence" value="ECO:0007669"/>
    <property type="project" value="UniProtKB-EC"/>
</dbReference>
<dbReference type="GO" id="GO:0046872">
    <property type="term" value="F:metal ion binding"/>
    <property type="evidence" value="ECO:0007669"/>
    <property type="project" value="UniProtKB-KW"/>
</dbReference>
<dbReference type="GO" id="GO:0071555">
    <property type="term" value="P:cell wall organization"/>
    <property type="evidence" value="ECO:0007669"/>
    <property type="project" value="UniProtKB-KW"/>
</dbReference>
<dbReference type="GO" id="GO:0009251">
    <property type="term" value="P:glucan catabolic process"/>
    <property type="evidence" value="ECO:0007669"/>
    <property type="project" value="TreeGrafter"/>
</dbReference>
<dbReference type="FunFam" id="3.20.20.80:FF:000033">
    <property type="entry name" value="Glucan 1,3-beta-glucosidase A"/>
    <property type="match status" value="1"/>
</dbReference>
<dbReference type="Gene3D" id="3.20.20.80">
    <property type="entry name" value="Glycosidases"/>
    <property type="match status" value="1"/>
</dbReference>
<dbReference type="InterPro" id="IPR001547">
    <property type="entry name" value="Glyco_hydro_5"/>
</dbReference>
<dbReference type="InterPro" id="IPR017853">
    <property type="entry name" value="Glycoside_hydrolase_SF"/>
</dbReference>
<dbReference type="InterPro" id="IPR050386">
    <property type="entry name" value="Glycosyl_hydrolase_5"/>
</dbReference>
<dbReference type="PANTHER" id="PTHR31297:SF1">
    <property type="entry name" value="GLUCAN 1,3-BETA-GLUCOSIDASE I_II-RELATED"/>
    <property type="match status" value="1"/>
</dbReference>
<dbReference type="PANTHER" id="PTHR31297">
    <property type="entry name" value="GLUCAN ENDO-1,6-BETA-GLUCOSIDASE B"/>
    <property type="match status" value="1"/>
</dbReference>
<dbReference type="Pfam" id="PF00150">
    <property type="entry name" value="Cellulase"/>
    <property type="match status" value="1"/>
</dbReference>
<dbReference type="SUPFAM" id="SSF51445">
    <property type="entry name" value="(Trans)glycosidases"/>
    <property type="match status" value="1"/>
</dbReference>
<proteinExistence type="evidence at protein level"/>
<name>EXGA_ASPOR</name>
<accession>Q7Z9L3</accession>
<accession>Q2UK16</accession>
<comment type="function">
    <text evidence="1 3">Beta-glucanases participate in the metabolism of beta-glucan, the main structural component of the cell wall. It could also function biosynthetically as a transglycosylase (By similarity).</text>
</comment>
<comment type="catalytic activity">
    <reaction>
        <text>Successive hydrolysis of beta-D-glucose units from the non-reducing ends of (1-&gt;3)-beta-D-glucans, releasing alpha-glucose.</text>
        <dbReference type="EC" id="3.2.1.58"/>
    </reaction>
</comment>
<comment type="cofactor">
    <cofactor evidence="4">
        <name>Mn(2+)</name>
        <dbReference type="ChEBI" id="CHEBI:29035"/>
    </cofactor>
</comment>
<comment type="subunit">
    <text evidence="4">Monomer.</text>
</comment>
<comment type="subcellular location">
    <subcellularLocation>
        <location evidence="4">Secreted</location>
    </subcellularLocation>
</comment>
<comment type="induction">
    <text evidence="3">The combination of poor nutrition conditions and attachment of mycelia to a hydrophobic solid surface appears to be a major inducing factor.</text>
</comment>
<comment type="similarity">
    <text evidence="5">Belongs to the glycosyl hydrolase 5 (cellulase A) family.</text>
</comment>